<name>CAPP_PSEPF</name>
<organism>
    <name type="scientific">Pseudomonas fluorescens (strain Pf0-1)</name>
    <dbReference type="NCBI Taxonomy" id="205922"/>
    <lineage>
        <taxon>Bacteria</taxon>
        <taxon>Pseudomonadati</taxon>
        <taxon>Pseudomonadota</taxon>
        <taxon>Gammaproteobacteria</taxon>
        <taxon>Pseudomonadales</taxon>
        <taxon>Pseudomonadaceae</taxon>
        <taxon>Pseudomonas</taxon>
    </lineage>
</organism>
<gene>
    <name evidence="1" type="primary">ppc</name>
    <name type="ordered locus">Pfl01_1069</name>
</gene>
<keyword id="KW-0120">Carbon dioxide fixation</keyword>
<keyword id="KW-0456">Lyase</keyword>
<keyword id="KW-0460">Magnesium</keyword>
<proteinExistence type="inferred from homology"/>
<evidence type="ECO:0000255" key="1">
    <source>
        <dbReference type="HAMAP-Rule" id="MF_00595"/>
    </source>
</evidence>
<reference key="1">
    <citation type="journal article" date="2009" name="Genome Biol.">
        <title>Genomic and genetic analyses of diversity and plant interactions of Pseudomonas fluorescens.</title>
        <authorList>
            <person name="Silby M.W."/>
            <person name="Cerdeno-Tarraga A.M."/>
            <person name="Vernikos G.S."/>
            <person name="Giddens S.R."/>
            <person name="Jackson R.W."/>
            <person name="Preston G.M."/>
            <person name="Zhang X.-X."/>
            <person name="Moon C.D."/>
            <person name="Gehrig S.M."/>
            <person name="Godfrey S.A.C."/>
            <person name="Knight C.G."/>
            <person name="Malone J.G."/>
            <person name="Robinson Z."/>
            <person name="Spiers A.J."/>
            <person name="Harris S."/>
            <person name="Challis G.L."/>
            <person name="Yaxley A.M."/>
            <person name="Harris D."/>
            <person name="Seeger K."/>
            <person name="Murphy L."/>
            <person name="Rutter S."/>
            <person name="Squares R."/>
            <person name="Quail M.A."/>
            <person name="Saunders E."/>
            <person name="Mavromatis K."/>
            <person name="Brettin T.S."/>
            <person name="Bentley S.D."/>
            <person name="Hothersall J."/>
            <person name="Stephens E."/>
            <person name="Thomas C.M."/>
            <person name="Parkhill J."/>
            <person name="Levy S.B."/>
            <person name="Rainey P.B."/>
            <person name="Thomson N.R."/>
        </authorList>
    </citation>
    <scope>NUCLEOTIDE SEQUENCE [LARGE SCALE GENOMIC DNA]</scope>
    <source>
        <strain>Pf0-1</strain>
    </source>
</reference>
<comment type="function">
    <text evidence="1">Forms oxaloacetate, a four-carbon dicarboxylic acid source for the tricarboxylic acid cycle.</text>
</comment>
<comment type="catalytic activity">
    <reaction evidence="1">
        <text>oxaloacetate + phosphate = phosphoenolpyruvate + hydrogencarbonate</text>
        <dbReference type="Rhea" id="RHEA:28370"/>
        <dbReference type="ChEBI" id="CHEBI:16452"/>
        <dbReference type="ChEBI" id="CHEBI:17544"/>
        <dbReference type="ChEBI" id="CHEBI:43474"/>
        <dbReference type="ChEBI" id="CHEBI:58702"/>
        <dbReference type="EC" id="4.1.1.31"/>
    </reaction>
</comment>
<comment type="cofactor">
    <cofactor evidence="1">
        <name>Mg(2+)</name>
        <dbReference type="ChEBI" id="CHEBI:18420"/>
    </cofactor>
</comment>
<comment type="similarity">
    <text evidence="1">Belongs to the PEPCase type 1 family.</text>
</comment>
<feature type="chain" id="PRO_1000025580" description="Phosphoenolpyruvate carboxylase">
    <location>
        <begin position="1"/>
        <end position="876"/>
    </location>
</feature>
<feature type="active site" evidence="1">
    <location>
        <position position="138"/>
    </location>
</feature>
<feature type="active site" evidence="1">
    <location>
        <position position="543"/>
    </location>
</feature>
<accession>Q3KHE4</accession>
<sequence length="876" mass="97375">MTDIDARLREDVHLLGELLGNTIRDQYGEAFLDKIEQIRKGAKADRRGSMDAELSASLNQLSEDELLPVARAFNQFLNLANIAEQYQLIHRREETQAAPFESRVLPELLARLRNEGHSAESLARQLARLEIELVLTAHPTEVARRTLIQKYDAIAAQLAAQDHRDLTTAEREQIHNTLQRLIAEAWHTEEIRRTRPTPVDEAKWGFAVIEHSLWQAIPHHMRKADQALFAATGLRLPLEAAPIRFASWMGGDRDGNPNVTAAVTREVLLLARWMAADLYLRDVDHLAAELSMQQASDALKARAGDSAEPYRAVLKQLRERLRATRNWAHASLTATTPAPADVLHNNRDLLDPLELCFNSLHECGMGVIADGPLLDCLRRAVTFGLFLVRLDVRQDSSRHSAAMTEITDYLGLGKYEEWDEEQRISFLTRELQNRRPLLPAHFKPSADTAEVLATCKEIAAAPGASLGSYVISMAGAASDVLAVQLLLKESGVLRPMRVVPLFETLADLDNAGPVIERLLLLPGYRARLQGPQEVMIGYSDSAKDAGTTAAAWAQYRAQERLVEICREQQVELLLFHGRGGTVGRGGGPAHAAILSQPPGSVAGRFRTTEQGEMIRFKFGLPDIAEQNLNLYLAAVLEATLLPPPPPTPEWRHLMDELAADGVAAYRAVVRENPQFVEYFRQSTPEQELGRLPLGSRPAKRRAGGIESLRAIPWIFGWTQTRLMLPAWLGWETALSKALERGEGELLGQMREQWPFFRTRIDMLEMVLAKADADIALSYDERLVEPDLLPLGAHLRDLLSQACSVVLGLTGQSQLLAHSPDTLEFIRLRNTYLDPLHLLQAELLARSRRQNVEQGSPVEQALLVSVAGIAAGLRNTG</sequence>
<protein>
    <recommendedName>
        <fullName evidence="1">Phosphoenolpyruvate carboxylase</fullName>
        <shortName evidence="1">PEPC</shortName>
        <shortName evidence="1">PEPCase</shortName>
        <ecNumber evidence="1">4.1.1.31</ecNumber>
    </recommendedName>
</protein>
<dbReference type="EC" id="4.1.1.31" evidence="1"/>
<dbReference type="EMBL" id="CP000094">
    <property type="protein sequence ID" value="ABA72812.1"/>
    <property type="molecule type" value="Genomic_DNA"/>
</dbReference>
<dbReference type="RefSeq" id="WP_011332655.1">
    <property type="nucleotide sequence ID" value="NC_007492.2"/>
</dbReference>
<dbReference type="SMR" id="Q3KHE4"/>
<dbReference type="KEGG" id="pfo:Pfl01_1069"/>
<dbReference type="eggNOG" id="COG2352">
    <property type="taxonomic scope" value="Bacteria"/>
</dbReference>
<dbReference type="HOGENOM" id="CLU_006557_2_0_6"/>
<dbReference type="Proteomes" id="UP000002704">
    <property type="component" value="Chromosome"/>
</dbReference>
<dbReference type="GO" id="GO:0005829">
    <property type="term" value="C:cytosol"/>
    <property type="evidence" value="ECO:0007669"/>
    <property type="project" value="TreeGrafter"/>
</dbReference>
<dbReference type="GO" id="GO:0000287">
    <property type="term" value="F:magnesium ion binding"/>
    <property type="evidence" value="ECO:0007669"/>
    <property type="project" value="UniProtKB-UniRule"/>
</dbReference>
<dbReference type="GO" id="GO:0008964">
    <property type="term" value="F:phosphoenolpyruvate carboxylase activity"/>
    <property type="evidence" value="ECO:0007669"/>
    <property type="project" value="UniProtKB-UniRule"/>
</dbReference>
<dbReference type="GO" id="GO:0015977">
    <property type="term" value="P:carbon fixation"/>
    <property type="evidence" value="ECO:0007669"/>
    <property type="project" value="UniProtKB-UniRule"/>
</dbReference>
<dbReference type="GO" id="GO:0006107">
    <property type="term" value="P:oxaloacetate metabolic process"/>
    <property type="evidence" value="ECO:0007669"/>
    <property type="project" value="UniProtKB-UniRule"/>
</dbReference>
<dbReference type="GO" id="GO:0006099">
    <property type="term" value="P:tricarboxylic acid cycle"/>
    <property type="evidence" value="ECO:0007669"/>
    <property type="project" value="InterPro"/>
</dbReference>
<dbReference type="Gene3D" id="1.20.1440.90">
    <property type="entry name" value="Phosphoenolpyruvate/pyruvate domain"/>
    <property type="match status" value="1"/>
</dbReference>
<dbReference type="HAMAP" id="MF_00595">
    <property type="entry name" value="PEPcase_type1"/>
    <property type="match status" value="1"/>
</dbReference>
<dbReference type="InterPro" id="IPR021135">
    <property type="entry name" value="PEP_COase"/>
</dbReference>
<dbReference type="InterPro" id="IPR022805">
    <property type="entry name" value="PEP_COase_bac/pln-type"/>
</dbReference>
<dbReference type="InterPro" id="IPR018129">
    <property type="entry name" value="PEP_COase_Lys_AS"/>
</dbReference>
<dbReference type="InterPro" id="IPR033129">
    <property type="entry name" value="PEPCASE_His_AS"/>
</dbReference>
<dbReference type="InterPro" id="IPR015813">
    <property type="entry name" value="Pyrv/PenolPyrv_kinase-like_dom"/>
</dbReference>
<dbReference type="NCBIfam" id="NF000584">
    <property type="entry name" value="PRK00009.1"/>
    <property type="match status" value="1"/>
</dbReference>
<dbReference type="PANTHER" id="PTHR30523">
    <property type="entry name" value="PHOSPHOENOLPYRUVATE CARBOXYLASE"/>
    <property type="match status" value="1"/>
</dbReference>
<dbReference type="PANTHER" id="PTHR30523:SF6">
    <property type="entry name" value="PHOSPHOENOLPYRUVATE CARBOXYLASE"/>
    <property type="match status" value="1"/>
</dbReference>
<dbReference type="Pfam" id="PF00311">
    <property type="entry name" value="PEPcase"/>
    <property type="match status" value="1"/>
</dbReference>
<dbReference type="PRINTS" id="PR00150">
    <property type="entry name" value="PEPCARBXLASE"/>
</dbReference>
<dbReference type="SUPFAM" id="SSF51621">
    <property type="entry name" value="Phosphoenolpyruvate/pyruvate domain"/>
    <property type="match status" value="1"/>
</dbReference>
<dbReference type="PROSITE" id="PS00781">
    <property type="entry name" value="PEPCASE_1"/>
    <property type="match status" value="1"/>
</dbReference>
<dbReference type="PROSITE" id="PS00393">
    <property type="entry name" value="PEPCASE_2"/>
    <property type="match status" value="1"/>
</dbReference>